<gene>
    <name evidence="1" type="primary">comB</name>
    <name type="ordered locus">Ava_0497</name>
</gene>
<protein>
    <recommendedName>
        <fullName evidence="1">Probable 2-phosphosulfolactate phosphatase</fullName>
        <ecNumber evidence="1">3.1.3.71</ecNumber>
    </recommendedName>
</protein>
<accession>Q3MFW5</accession>
<keyword id="KW-0378">Hydrolase</keyword>
<keyword id="KW-0460">Magnesium</keyword>
<organism>
    <name type="scientific">Trichormus variabilis (strain ATCC 29413 / PCC 7937)</name>
    <name type="common">Anabaena variabilis</name>
    <dbReference type="NCBI Taxonomy" id="240292"/>
    <lineage>
        <taxon>Bacteria</taxon>
        <taxon>Bacillati</taxon>
        <taxon>Cyanobacteriota</taxon>
        <taxon>Cyanophyceae</taxon>
        <taxon>Nostocales</taxon>
        <taxon>Nostocaceae</taxon>
        <taxon>Trichormus</taxon>
    </lineage>
</organism>
<dbReference type="EC" id="3.1.3.71" evidence="1"/>
<dbReference type="EMBL" id="CP000117">
    <property type="protein sequence ID" value="ABA20121.1"/>
    <property type="molecule type" value="Genomic_DNA"/>
</dbReference>
<dbReference type="SMR" id="Q3MFW5"/>
<dbReference type="STRING" id="240292.Ava_0497"/>
<dbReference type="KEGG" id="ava:Ava_0497"/>
<dbReference type="eggNOG" id="COG2045">
    <property type="taxonomic scope" value="Bacteria"/>
</dbReference>
<dbReference type="HOGENOM" id="CLU_070028_0_1_3"/>
<dbReference type="Proteomes" id="UP000002533">
    <property type="component" value="Chromosome"/>
</dbReference>
<dbReference type="GO" id="GO:0050532">
    <property type="term" value="F:2-phosphosulfolactate phosphatase activity"/>
    <property type="evidence" value="ECO:0007669"/>
    <property type="project" value="UniProtKB-UniRule"/>
</dbReference>
<dbReference type="GO" id="GO:0000287">
    <property type="term" value="F:magnesium ion binding"/>
    <property type="evidence" value="ECO:0007669"/>
    <property type="project" value="UniProtKB-UniRule"/>
</dbReference>
<dbReference type="GO" id="GO:0050545">
    <property type="term" value="F:sulfopyruvate decarboxylase activity"/>
    <property type="evidence" value="ECO:0007669"/>
    <property type="project" value="TreeGrafter"/>
</dbReference>
<dbReference type="FunFam" id="3.90.1560.10:FF:000001">
    <property type="entry name" value="Probable 2-phosphosulfolactate phosphatase"/>
    <property type="match status" value="1"/>
</dbReference>
<dbReference type="Gene3D" id="3.90.1560.10">
    <property type="entry name" value="ComB-like"/>
    <property type="match status" value="1"/>
</dbReference>
<dbReference type="HAMAP" id="MF_00490">
    <property type="entry name" value="ComB"/>
    <property type="match status" value="1"/>
</dbReference>
<dbReference type="InterPro" id="IPR005238">
    <property type="entry name" value="ComB-like"/>
</dbReference>
<dbReference type="InterPro" id="IPR036702">
    <property type="entry name" value="ComB-like_sf"/>
</dbReference>
<dbReference type="NCBIfam" id="NF002056">
    <property type="entry name" value="PRK00886.1-5"/>
    <property type="match status" value="1"/>
</dbReference>
<dbReference type="PANTHER" id="PTHR37311">
    <property type="entry name" value="2-PHOSPHOSULFOLACTATE PHOSPHATASE-RELATED"/>
    <property type="match status" value="1"/>
</dbReference>
<dbReference type="PANTHER" id="PTHR37311:SF1">
    <property type="entry name" value="2-PHOSPHOSULFOLACTATE PHOSPHATASE-RELATED"/>
    <property type="match status" value="1"/>
</dbReference>
<dbReference type="Pfam" id="PF04029">
    <property type="entry name" value="2-ph_phosp"/>
    <property type="match status" value="1"/>
</dbReference>
<dbReference type="SUPFAM" id="SSF142823">
    <property type="entry name" value="ComB-like"/>
    <property type="match status" value="1"/>
</dbReference>
<evidence type="ECO:0000255" key="1">
    <source>
        <dbReference type="HAMAP-Rule" id="MF_00490"/>
    </source>
</evidence>
<feature type="chain" id="PRO_1000014459" description="Probable 2-phosphosulfolactate phosphatase">
    <location>
        <begin position="1"/>
        <end position="245"/>
    </location>
</feature>
<sequence>MKLFVYHTPELTPKDQVPDCAIAVDVLRATSTIATVLSAGGEAVQVFSDLDELIAVSETWPPQKRLRAGERGGGKVAGFELGNSPLDCTPELVEGRRLFISTTNGTRALKRVQDSATVLTAAFINRAAVVQYLLEKQPETVWIVGSGWEGSYSLEDTACAGAIAHSVVEKSQLPPEKLAGNDEVISAIALYSQWQDNLLGLLHHASHGQRLLRLECHEDLKYCSQTDVLTVLPIQQEAGVFKTKN</sequence>
<name>COMB_TRIV2</name>
<proteinExistence type="inferred from homology"/>
<reference key="1">
    <citation type="journal article" date="2014" name="Stand. Genomic Sci.">
        <title>Complete genome sequence of Anabaena variabilis ATCC 29413.</title>
        <authorList>
            <person name="Thiel T."/>
            <person name="Pratte B.S."/>
            <person name="Zhong J."/>
            <person name="Goodwin L."/>
            <person name="Copeland A."/>
            <person name="Lucas S."/>
            <person name="Han C."/>
            <person name="Pitluck S."/>
            <person name="Land M.L."/>
            <person name="Kyrpides N.C."/>
            <person name="Woyke T."/>
        </authorList>
    </citation>
    <scope>NUCLEOTIDE SEQUENCE [LARGE SCALE GENOMIC DNA]</scope>
    <source>
        <strain>ATCC 29413 / PCC 7937</strain>
    </source>
</reference>
<comment type="catalytic activity">
    <reaction evidence="1">
        <text>(2R)-O-phospho-3-sulfolactate + H2O = (2R)-3-sulfolactate + phosphate</text>
        <dbReference type="Rhea" id="RHEA:23416"/>
        <dbReference type="ChEBI" id="CHEBI:15377"/>
        <dbReference type="ChEBI" id="CHEBI:15597"/>
        <dbReference type="ChEBI" id="CHEBI:43474"/>
        <dbReference type="ChEBI" id="CHEBI:58738"/>
        <dbReference type="EC" id="3.1.3.71"/>
    </reaction>
</comment>
<comment type="cofactor">
    <cofactor evidence="1">
        <name>Mg(2+)</name>
        <dbReference type="ChEBI" id="CHEBI:18420"/>
    </cofactor>
</comment>
<comment type="similarity">
    <text evidence="1">Belongs to the ComB family.</text>
</comment>